<feature type="chain" id="PRO_0000259377" description="tRNA (guanine(26)-N(2))-dimethyltransferase">
    <location>
        <begin position="1"/>
        <end position="366"/>
    </location>
</feature>
<feature type="domain" description="Trm1 methyltransferase" evidence="1">
    <location>
        <begin position="1"/>
        <end position="365"/>
    </location>
</feature>
<feature type="region of interest" description="Disordered" evidence="2">
    <location>
        <begin position="1"/>
        <end position="28"/>
    </location>
</feature>
<feature type="binding site" evidence="1">
    <location>
        <position position="37"/>
    </location>
    <ligand>
        <name>S-adenosyl-L-methionine</name>
        <dbReference type="ChEBI" id="CHEBI:59789"/>
    </ligand>
</feature>
<feature type="binding site" evidence="1">
    <location>
        <position position="64"/>
    </location>
    <ligand>
        <name>S-adenosyl-L-methionine</name>
        <dbReference type="ChEBI" id="CHEBI:59789"/>
    </ligand>
</feature>
<feature type="binding site" evidence="1">
    <location>
        <position position="79"/>
    </location>
    <ligand>
        <name>S-adenosyl-L-methionine</name>
        <dbReference type="ChEBI" id="CHEBI:59789"/>
    </ligand>
</feature>
<feature type="binding site" evidence="1">
    <location>
        <position position="234"/>
    </location>
    <ligand>
        <name>Zn(2+)</name>
        <dbReference type="ChEBI" id="CHEBI:29105"/>
    </ligand>
</feature>
<feature type="binding site" evidence="1">
    <location>
        <position position="237"/>
    </location>
    <ligand>
        <name>Zn(2+)</name>
        <dbReference type="ChEBI" id="CHEBI:29105"/>
    </ligand>
</feature>
<feature type="binding site" evidence="1">
    <location>
        <position position="254"/>
    </location>
    <ligand>
        <name>Zn(2+)</name>
        <dbReference type="ChEBI" id="CHEBI:29105"/>
    </ligand>
</feature>
<feature type="binding site" evidence="1">
    <location>
        <position position="257"/>
    </location>
    <ligand>
        <name>Zn(2+)</name>
        <dbReference type="ChEBI" id="CHEBI:29105"/>
    </ligand>
</feature>
<proteinExistence type="inferred from homology"/>
<organism>
    <name type="scientific">Natronomonas pharaonis (strain ATCC 35678 / DSM 2160 / CIP 103997 / JCM 8858 / NBRC 14720 / NCIMB 2260 / Gabara)</name>
    <name type="common">Halobacterium pharaonis</name>
    <dbReference type="NCBI Taxonomy" id="348780"/>
    <lineage>
        <taxon>Archaea</taxon>
        <taxon>Methanobacteriati</taxon>
        <taxon>Methanobacteriota</taxon>
        <taxon>Stenosarchaea group</taxon>
        <taxon>Halobacteria</taxon>
        <taxon>Halobacteriales</taxon>
        <taxon>Haloarculaceae</taxon>
        <taxon>Natronomonas</taxon>
    </lineage>
</organism>
<sequence>MEVSEGSVTVEVPEERHGASEGSGEGVFYNPVQELNRDITAAVLRTVSDDCDEYLDAMAASGIRSVRAAAAGYDVTACDIDDDAVALTRRNLDRNGVDGTVHHRNVNAHMHESAHDVVDLDPFGTPMAFADAAVRSAGEYLCVTATDTAPLCGAHFESGVRSYDAVPRNTEFHAEMGLRVLLSALVRTAARHDIAAEPVLSHVTSHYVRTYLRVDSGARAADALLEHLGYIDHCQRCLWRDHERGRVPDPTTTCPHCGQSTWTAGPVWLGPAHDAAFVDDVAGAIPDSFGTADKARDLLSTVATELHQPTHYDQHKLYKRWNEPNIAMDDFLAALRAAGHEASRTHYGGTTFKTDADVADIRNAVE</sequence>
<reference key="1">
    <citation type="journal article" date="2005" name="Genome Res.">
        <title>Living with two extremes: conclusions from the genome sequence of Natronomonas pharaonis.</title>
        <authorList>
            <person name="Falb M."/>
            <person name="Pfeiffer F."/>
            <person name="Palm P."/>
            <person name="Rodewald K."/>
            <person name="Hickmann V."/>
            <person name="Tittor J."/>
            <person name="Oesterhelt D."/>
        </authorList>
    </citation>
    <scope>NUCLEOTIDE SEQUENCE [LARGE SCALE GENOMIC DNA]</scope>
    <source>
        <strain>ATCC 35678 / DSM 2160 / CIP 103997 / JCM 8858 / NBRC 14720 / NCIMB 2260 / Gabara</strain>
    </source>
</reference>
<gene>
    <name evidence="1" type="primary">trm1</name>
    <name type="ordered locus">NP_0194A</name>
</gene>
<protein>
    <recommendedName>
        <fullName evidence="1">tRNA (guanine(26)-N(2))-dimethyltransferase</fullName>
        <ecNumber evidence="1">2.1.1.216</ecNumber>
    </recommendedName>
    <alternativeName>
        <fullName evidence="1">tRNA 2,2-dimethylguanosine-26 methyltransferase</fullName>
    </alternativeName>
    <alternativeName>
        <fullName evidence="1">tRNA(guanine-26,N(2)-N(2)) methyltransferase</fullName>
    </alternativeName>
    <alternativeName>
        <fullName evidence="1">tRNA(m(2,2)G26)dimethyltransferase</fullName>
    </alternativeName>
</protein>
<comment type="function">
    <text evidence="1">Dimethylates a single guanine residue at position 26 of a number of tRNAs using S-adenosyl-L-methionine as donor of the methyl groups.</text>
</comment>
<comment type="catalytic activity">
    <reaction evidence="1">
        <text>guanosine(26) in tRNA + 2 S-adenosyl-L-methionine = N(2)-dimethylguanosine(26) in tRNA + 2 S-adenosyl-L-homocysteine + 2 H(+)</text>
        <dbReference type="Rhea" id="RHEA:43140"/>
        <dbReference type="Rhea" id="RHEA-COMP:10359"/>
        <dbReference type="Rhea" id="RHEA-COMP:10360"/>
        <dbReference type="ChEBI" id="CHEBI:15378"/>
        <dbReference type="ChEBI" id="CHEBI:57856"/>
        <dbReference type="ChEBI" id="CHEBI:59789"/>
        <dbReference type="ChEBI" id="CHEBI:74269"/>
        <dbReference type="ChEBI" id="CHEBI:74513"/>
        <dbReference type="EC" id="2.1.1.216"/>
    </reaction>
</comment>
<comment type="similarity">
    <text evidence="1">Belongs to the class I-like SAM-binding methyltransferase superfamily. Trm1 family.</text>
</comment>
<accession>Q3IUJ2</accession>
<evidence type="ECO:0000255" key="1">
    <source>
        <dbReference type="HAMAP-Rule" id="MF_00290"/>
    </source>
</evidence>
<evidence type="ECO:0000256" key="2">
    <source>
        <dbReference type="SAM" id="MobiDB-lite"/>
    </source>
</evidence>
<name>TRM1_NATPD</name>
<keyword id="KW-0479">Metal-binding</keyword>
<keyword id="KW-0489">Methyltransferase</keyword>
<keyword id="KW-1185">Reference proteome</keyword>
<keyword id="KW-0694">RNA-binding</keyword>
<keyword id="KW-0949">S-adenosyl-L-methionine</keyword>
<keyword id="KW-0808">Transferase</keyword>
<keyword id="KW-0819">tRNA processing</keyword>
<keyword id="KW-0820">tRNA-binding</keyword>
<keyword id="KW-0862">Zinc</keyword>
<dbReference type="EC" id="2.1.1.216" evidence="1"/>
<dbReference type="EMBL" id="CR936257">
    <property type="protein sequence ID" value="CAI48188.1"/>
    <property type="molecule type" value="Genomic_DNA"/>
</dbReference>
<dbReference type="RefSeq" id="WP_011321827.1">
    <property type="nucleotide sequence ID" value="NC_007426.1"/>
</dbReference>
<dbReference type="SMR" id="Q3IUJ2"/>
<dbReference type="STRING" id="348780.NP_0194A"/>
<dbReference type="EnsemblBacteria" id="CAI48188">
    <property type="protein sequence ID" value="CAI48188"/>
    <property type="gene ID" value="NP_0194A"/>
</dbReference>
<dbReference type="GeneID" id="3703360"/>
<dbReference type="KEGG" id="nph:NP_0194A"/>
<dbReference type="eggNOG" id="arCOG01219">
    <property type="taxonomic scope" value="Archaea"/>
</dbReference>
<dbReference type="HOGENOM" id="CLU_010862_5_1_2"/>
<dbReference type="OrthoDB" id="372177at2157"/>
<dbReference type="Proteomes" id="UP000002698">
    <property type="component" value="Chromosome"/>
</dbReference>
<dbReference type="GO" id="GO:0160104">
    <property type="term" value="F:tRNA (guanine(26)-N2)-dimethyltransferase activity"/>
    <property type="evidence" value="ECO:0007669"/>
    <property type="project" value="UniProtKB-UniRule"/>
</dbReference>
<dbReference type="GO" id="GO:0000049">
    <property type="term" value="F:tRNA binding"/>
    <property type="evidence" value="ECO:0007669"/>
    <property type="project" value="UniProtKB-KW"/>
</dbReference>
<dbReference type="GO" id="GO:0002940">
    <property type="term" value="P:tRNA N2-guanine methylation"/>
    <property type="evidence" value="ECO:0007669"/>
    <property type="project" value="TreeGrafter"/>
</dbReference>
<dbReference type="CDD" id="cd02440">
    <property type="entry name" value="AdoMet_MTases"/>
    <property type="match status" value="1"/>
</dbReference>
<dbReference type="Gene3D" id="3.30.56.70">
    <property type="entry name" value="N2,N2-dimethylguanosine tRNA methyltransferase, C-terminal domain"/>
    <property type="match status" value="1"/>
</dbReference>
<dbReference type="Gene3D" id="3.40.50.150">
    <property type="entry name" value="Vaccinia Virus protein VP39"/>
    <property type="match status" value="1"/>
</dbReference>
<dbReference type="HAMAP" id="MF_00290">
    <property type="entry name" value="tRNA_dimethyltr_TRM1"/>
    <property type="match status" value="1"/>
</dbReference>
<dbReference type="InterPro" id="IPR029063">
    <property type="entry name" value="SAM-dependent_MTases_sf"/>
</dbReference>
<dbReference type="InterPro" id="IPR002905">
    <property type="entry name" value="Trm1"/>
</dbReference>
<dbReference type="InterPro" id="IPR022923">
    <property type="entry name" value="TRM1_arc_bac"/>
</dbReference>
<dbReference type="InterPro" id="IPR042296">
    <property type="entry name" value="tRNA_met_Trm1_C"/>
</dbReference>
<dbReference type="NCBIfam" id="NF003327">
    <property type="entry name" value="PRK04338.1-1"/>
    <property type="match status" value="1"/>
</dbReference>
<dbReference type="NCBIfam" id="TIGR00308">
    <property type="entry name" value="TRM1"/>
    <property type="match status" value="1"/>
</dbReference>
<dbReference type="PANTHER" id="PTHR10631">
    <property type="entry name" value="N 2 ,N 2 -DIMETHYLGUANOSINE TRNA METHYLTRANSFERASE"/>
    <property type="match status" value="1"/>
</dbReference>
<dbReference type="PANTHER" id="PTHR10631:SF3">
    <property type="entry name" value="TRNA (GUANINE(26)-N(2))-DIMETHYLTRANSFERASE"/>
    <property type="match status" value="1"/>
</dbReference>
<dbReference type="Pfam" id="PF02005">
    <property type="entry name" value="TRM"/>
    <property type="match status" value="1"/>
</dbReference>
<dbReference type="SUPFAM" id="SSF53335">
    <property type="entry name" value="S-adenosyl-L-methionine-dependent methyltransferases"/>
    <property type="match status" value="1"/>
</dbReference>
<dbReference type="PROSITE" id="PS51626">
    <property type="entry name" value="SAM_MT_TRM1"/>
    <property type="match status" value="1"/>
</dbReference>